<feature type="signal peptide">
    <location>
        <begin position="1"/>
        <end position="24"/>
    </location>
</feature>
<feature type="peptide" id="PRO_0000015785" description="Insulin B chain">
    <location>
        <begin position="25"/>
        <end position="54"/>
    </location>
</feature>
<feature type="propeptide" id="PRO_0000015786" description="C peptide">
    <location>
        <begin position="57"/>
        <end position="87"/>
    </location>
</feature>
<feature type="peptide" id="PRO_0000015787" description="Insulin A chain">
    <location>
        <begin position="90"/>
        <end position="110"/>
    </location>
</feature>
<feature type="disulfide bond" description="Interchain (between B and A chains)">
    <location>
        <begin position="31"/>
        <end position="96"/>
    </location>
</feature>
<feature type="disulfide bond" description="Interchain (between B and A chains)">
    <location>
        <begin position="43"/>
        <end position="109"/>
    </location>
</feature>
<feature type="disulfide bond">
    <location>
        <begin position="95"/>
        <end position="100"/>
    </location>
</feature>
<sequence>MALWMRLLPLLALLALWGPDPVPAFVNQHLCGSHLVEALYLVCGERGFFYTPKTRREAEDPQVGQVELGGGPGAGSLQPLALEGSLQKRGIVEQCCTSICSLYQLENYCN</sequence>
<organism>
    <name type="scientific">Chlorocebus aethiops</name>
    <name type="common">Green monkey</name>
    <name type="synonym">Cercopithecus aethiops</name>
    <dbReference type="NCBI Taxonomy" id="9534"/>
    <lineage>
        <taxon>Eukaryota</taxon>
        <taxon>Metazoa</taxon>
        <taxon>Chordata</taxon>
        <taxon>Craniata</taxon>
        <taxon>Vertebrata</taxon>
        <taxon>Euteleostomi</taxon>
        <taxon>Mammalia</taxon>
        <taxon>Eutheria</taxon>
        <taxon>Euarchontoglires</taxon>
        <taxon>Primates</taxon>
        <taxon>Haplorrhini</taxon>
        <taxon>Catarrhini</taxon>
        <taxon>Cercopithecidae</taxon>
        <taxon>Cercopithecinae</taxon>
        <taxon>Chlorocebus</taxon>
    </lineage>
</organism>
<gene>
    <name type="primary">INS</name>
</gene>
<reference key="1">
    <citation type="journal article" date="1992" name="Mol. Biol. Evol.">
        <title>Sequences of primate insulin genes support the hypothesis of a slower rate of molecular evolution in humans and apes than in monkeys.</title>
        <authorList>
            <person name="Seino S."/>
            <person name="Bell G.I."/>
            <person name="Li W."/>
        </authorList>
    </citation>
    <scope>NUCLEOTIDE SEQUENCE [GENOMIC DNA]</scope>
</reference>
<reference key="2">
    <citation type="journal article" date="1972" name="J. Biol. Chem.">
        <title>Determination of the amino acid sequence of the monkey, sheep, and dog proinsulin C-peptides by a semi-micro Edman degradation procedure.</title>
        <authorList>
            <person name="Peterson J.D."/>
            <person name="Nehrlich S."/>
            <person name="Oyer P.E."/>
            <person name="Steiner D.F."/>
        </authorList>
    </citation>
    <scope>PROTEIN SEQUENCE OF 57-87</scope>
</reference>
<keyword id="KW-0119">Carbohydrate metabolism</keyword>
<keyword id="KW-0165">Cleavage on pair of basic residues</keyword>
<keyword id="KW-0903">Direct protein sequencing</keyword>
<keyword id="KW-1015">Disulfide bond</keyword>
<keyword id="KW-0313">Glucose metabolism</keyword>
<keyword id="KW-0372">Hormone</keyword>
<keyword id="KW-0964">Secreted</keyword>
<keyword id="KW-0732">Signal</keyword>
<comment type="function">
    <text>Insulin decreases blood glucose concentration. It increases cell permeability to monosaccharides, amino acids and fatty acids. It accelerates glycolysis, the pentose phosphate cycle, and glycogen synthesis in liver.</text>
</comment>
<comment type="subunit">
    <text>Heterodimer of a B chain and an A chain linked by two disulfide bonds.</text>
</comment>
<comment type="subcellular location">
    <subcellularLocation>
        <location>Secreted</location>
    </subcellularLocation>
</comment>
<comment type="similarity">
    <text evidence="1">Belongs to the insulin family.</text>
</comment>
<evidence type="ECO:0000305" key="1"/>
<protein>
    <recommendedName>
        <fullName>Insulin</fullName>
    </recommendedName>
    <component>
        <recommendedName>
            <fullName>Insulin B chain</fullName>
        </recommendedName>
    </component>
    <component>
        <recommendedName>
            <fullName>Insulin A chain</fullName>
        </recommendedName>
    </component>
</protein>
<dbReference type="EMBL" id="X61092">
    <property type="protein sequence ID" value="CAA43405.1"/>
    <property type="molecule type" value="Genomic_DNA"/>
</dbReference>
<dbReference type="PIR" id="B42179">
    <property type="entry name" value="B42179"/>
</dbReference>
<dbReference type="BMRB" id="P30407"/>
<dbReference type="SMR" id="P30407"/>
<dbReference type="GO" id="GO:0005615">
    <property type="term" value="C:extracellular space"/>
    <property type="evidence" value="ECO:0007669"/>
    <property type="project" value="TreeGrafter"/>
</dbReference>
<dbReference type="GO" id="GO:0005179">
    <property type="term" value="F:hormone activity"/>
    <property type="evidence" value="ECO:0007669"/>
    <property type="project" value="UniProtKB-KW"/>
</dbReference>
<dbReference type="GO" id="GO:1901701">
    <property type="term" value="P:cellular response to oxygen-containing compound"/>
    <property type="evidence" value="ECO:0007669"/>
    <property type="project" value="UniProtKB-ARBA"/>
</dbReference>
<dbReference type="GO" id="GO:0042593">
    <property type="term" value="P:glucose homeostasis"/>
    <property type="evidence" value="ECO:0007669"/>
    <property type="project" value="TreeGrafter"/>
</dbReference>
<dbReference type="GO" id="GO:0006006">
    <property type="term" value="P:glucose metabolic process"/>
    <property type="evidence" value="ECO:0007669"/>
    <property type="project" value="UniProtKB-KW"/>
</dbReference>
<dbReference type="GO" id="GO:0050714">
    <property type="term" value="P:positive regulation of protein secretion"/>
    <property type="evidence" value="ECO:0007669"/>
    <property type="project" value="TreeGrafter"/>
</dbReference>
<dbReference type="CDD" id="cd04367">
    <property type="entry name" value="IlGF_insulin_like"/>
    <property type="match status" value="1"/>
</dbReference>
<dbReference type="FunFam" id="1.10.100.10:FF:000003">
    <property type="entry name" value="Insulin"/>
    <property type="match status" value="1"/>
</dbReference>
<dbReference type="Gene3D" id="1.10.100.10">
    <property type="entry name" value="Insulin-like"/>
    <property type="match status" value="1"/>
</dbReference>
<dbReference type="InterPro" id="IPR004825">
    <property type="entry name" value="Insulin"/>
</dbReference>
<dbReference type="InterPro" id="IPR016179">
    <property type="entry name" value="Insulin-like"/>
</dbReference>
<dbReference type="InterPro" id="IPR036438">
    <property type="entry name" value="Insulin-like_sf"/>
</dbReference>
<dbReference type="InterPro" id="IPR022353">
    <property type="entry name" value="Insulin_CS"/>
</dbReference>
<dbReference type="InterPro" id="IPR022352">
    <property type="entry name" value="Insulin_family"/>
</dbReference>
<dbReference type="PANTHER" id="PTHR11454:SF9">
    <property type="entry name" value="INSULIN"/>
    <property type="match status" value="1"/>
</dbReference>
<dbReference type="PANTHER" id="PTHR11454">
    <property type="entry name" value="INSULIN/INSULIN GROWTH FACTOR"/>
    <property type="match status" value="1"/>
</dbReference>
<dbReference type="Pfam" id="PF00049">
    <property type="entry name" value="Insulin"/>
    <property type="match status" value="1"/>
</dbReference>
<dbReference type="PRINTS" id="PR00277">
    <property type="entry name" value="INSULIN"/>
</dbReference>
<dbReference type="PRINTS" id="PR00276">
    <property type="entry name" value="INSULINFAMLY"/>
</dbReference>
<dbReference type="SMART" id="SM00078">
    <property type="entry name" value="IlGF"/>
    <property type="match status" value="1"/>
</dbReference>
<dbReference type="SUPFAM" id="SSF56994">
    <property type="entry name" value="Insulin-like"/>
    <property type="match status" value="1"/>
</dbReference>
<dbReference type="PROSITE" id="PS00262">
    <property type="entry name" value="INSULIN"/>
    <property type="match status" value="1"/>
</dbReference>
<name>INS_CHLAE</name>
<accession>P30407</accession>
<accession>P01309</accession>
<proteinExistence type="evidence at protein level"/>